<keyword id="KW-0067">ATP-binding</keyword>
<keyword id="KW-0961">Cell wall biogenesis/degradation</keyword>
<keyword id="KW-0175">Coiled coil</keyword>
<keyword id="KW-0493">Microtubule</keyword>
<keyword id="KW-0505">Motor protein</keyword>
<keyword id="KW-0547">Nucleotide-binding</keyword>
<keyword id="KW-1185">Reference proteome</keyword>
<proteinExistence type="evidence at transcript level"/>
<gene>
    <name evidence="8" type="primary">KIN4B</name>
    <name evidence="10" type="synonym">KICP-02</name>
    <name evidence="9" type="ordered locus">At3g50240</name>
    <name evidence="11" type="ORF">F11C1_80</name>
</gene>
<evidence type="ECO:0000250" key="1">
    <source>
        <dbReference type="UniProtKB" id="Q8GS71"/>
    </source>
</evidence>
<evidence type="ECO:0000255" key="2"/>
<evidence type="ECO:0000255" key="3">
    <source>
        <dbReference type="PROSITE-ProRule" id="PRU00283"/>
    </source>
</evidence>
<evidence type="ECO:0000256" key="4">
    <source>
        <dbReference type="SAM" id="MobiDB-lite"/>
    </source>
</evidence>
<evidence type="ECO:0000269" key="5">
    <source>
    </source>
</evidence>
<evidence type="ECO:0000303" key="6">
    <source>
    </source>
</evidence>
<evidence type="ECO:0000303" key="7">
    <source>
    </source>
</evidence>
<evidence type="ECO:0000305" key="8"/>
<evidence type="ECO:0000312" key="9">
    <source>
        <dbReference type="Araport" id="AT3G50240"/>
    </source>
</evidence>
<evidence type="ECO:0000312" key="10">
    <source>
        <dbReference type="EMBL" id="BAB55445.1"/>
    </source>
</evidence>
<evidence type="ECO:0000312" key="11">
    <source>
        <dbReference type="EMBL" id="CAB62303.1"/>
    </source>
</evidence>
<dbReference type="EMBL" id="AB061676">
    <property type="protein sequence ID" value="BAB55445.1"/>
    <property type="molecule type" value="mRNA"/>
</dbReference>
<dbReference type="EMBL" id="AL132976">
    <property type="protein sequence ID" value="CAB62303.1"/>
    <property type="status" value="ALT_SEQ"/>
    <property type="molecule type" value="Genomic_DNA"/>
</dbReference>
<dbReference type="EMBL" id="CP002686">
    <property type="protein sequence ID" value="AEE78644.1"/>
    <property type="molecule type" value="Genomic_DNA"/>
</dbReference>
<dbReference type="PIR" id="T45570">
    <property type="entry name" value="T45570"/>
</dbReference>
<dbReference type="RefSeq" id="NP_566931.1">
    <property type="nucleotide sequence ID" value="NM_114884.5"/>
</dbReference>
<dbReference type="SMR" id="Q94LW7"/>
<dbReference type="FunCoup" id="Q94LW7">
    <property type="interactions" value="1600"/>
</dbReference>
<dbReference type="STRING" id="3702.Q94LW7"/>
<dbReference type="iPTMnet" id="Q94LW7"/>
<dbReference type="PaxDb" id="3702-AT3G50240.1"/>
<dbReference type="EnsemblPlants" id="AT3G50240.1">
    <property type="protein sequence ID" value="AT3G50240.1"/>
    <property type="gene ID" value="AT3G50240"/>
</dbReference>
<dbReference type="GeneID" id="824186"/>
<dbReference type="Gramene" id="AT3G50240.1">
    <property type="protein sequence ID" value="AT3G50240.1"/>
    <property type="gene ID" value="AT3G50240"/>
</dbReference>
<dbReference type="KEGG" id="ath:AT3G50240"/>
<dbReference type="Araport" id="AT3G50240"/>
<dbReference type="TAIR" id="AT3G50240">
    <property type="gene designation" value="KICP-02"/>
</dbReference>
<dbReference type="eggNOG" id="KOG0244">
    <property type="taxonomic scope" value="Eukaryota"/>
</dbReference>
<dbReference type="HOGENOM" id="CLU_001485_4_2_1"/>
<dbReference type="InParanoid" id="Q94LW7"/>
<dbReference type="PhylomeDB" id="Q94LW7"/>
<dbReference type="PRO" id="PR:Q94LW7"/>
<dbReference type="Proteomes" id="UP000006548">
    <property type="component" value="Chromosome 3"/>
</dbReference>
<dbReference type="ExpressionAtlas" id="Q94LW7">
    <property type="expression patterns" value="baseline and differential"/>
</dbReference>
<dbReference type="GO" id="GO:0005874">
    <property type="term" value="C:microtubule"/>
    <property type="evidence" value="ECO:0007669"/>
    <property type="project" value="UniProtKB-KW"/>
</dbReference>
<dbReference type="GO" id="GO:0005524">
    <property type="term" value="F:ATP binding"/>
    <property type="evidence" value="ECO:0007669"/>
    <property type="project" value="UniProtKB-KW"/>
</dbReference>
<dbReference type="GO" id="GO:0008017">
    <property type="term" value="F:microtubule binding"/>
    <property type="evidence" value="ECO:0007669"/>
    <property type="project" value="InterPro"/>
</dbReference>
<dbReference type="GO" id="GO:0003777">
    <property type="term" value="F:microtubule motor activity"/>
    <property type="evidence" value="ECO:0007669"/>
    <property type="project" value="InterPro"/>
</dbReference>
<dbReference type="GO" id="GO:0071555">
    <property type="term" value="P:cell wall organization"/>
    <property type="evidence" value="ECO:0007669"/>
    <property type="project" value="UniProtKB-KW"/>
</dbReference>
<dbReference type="GO" id="GO:0007018">
    <property type="term" value="P:microtubule-based movement"/>
    <property type="evidence" value="ECO:0007669"/>
    <property type="project" value="InterPro"/>
</dbReference>
<dbReference type="CDD" id="cd01372">
    <property type="entry name" value="KISc_KIF4"/>
    <property type="match status" value="1"/>
</dbReference>
<dbReference type="FunFam" id="3.40.850.10:FF:000032">
    <property type="entry name" value="kinesin-like protein KIN-4A isoform X1"/>
    <property type="match status" value="1"/>
</dbReference>
<dbReference type="Gene3D" id="3.40.850.10">
    <property type="entry name" value="Kinesin motor domain"/>
    <property type="match status" value="1"/>
</dbReference>
<dbReference type="InterPro" id="IPR027640">
    <property type="entry name" value="Kinesin-like_fam"/>
</dbReference>
<dbReference type="InterPro" id="IPR019821">
    <property type="entry name" value="Kinesin_motor_CS"/>
</dbReference>
<dbReference type="InterPro" id="IPR001752">
    <property type="entry name" value="Kinesin_motor_dom"/>
</dbReference>
<dbReference type="InterPro" id="IPR036961">
    <property type="entry name" value="Kinesin_motor_dom_sf"/>
</dbReference>
<dbReference type="InterPro" id="IPR027417">
    <property type="entry name" value="P-loop_NTPase"/>
</dbReference>
<dbReference type="PANTHER" id="PTHR47969">
    <property type="entry name" value="CHROMOSOME-ASSOCIATED KINESIN KIF4A-RELATED"/>
    <property type="match status" value="1"/>
</dbReference>
<dbReference type="PANTHER" id="PTHR47969:SF3">
    <property type="entry name" value="KINESIN-LIKE PROTEIN KIN-4B"/>
    <property type="match status" value="1"/>
</dbReference>
<dbReference type="Pfam" id="PF00225">
    <property type="entry name" value="Kinesin"/>
    <property type="match status" value="1"/>
</dbReference>
<dbReference type="PRINTS" id="PR00380">
    <property type="entry name" value="KINESINHEAVY"/>
</dbReference>
<dbReference type="SMART" id="SM00129">
    <property type="entry name" value="KISc"/>
    <property type="match status" value="1"/>
</dbReference>
<dbReference type="SUPFAM" id="SSF52540">
    <property type="entry name" value="P-loop containing nucleoside triphosphate hydrolases"/>
    <property type="match status" value="1"/>
</dbReference>
<dbReference type="PROSITE" id="PS00411">
    <property type="entry name" value="KINESIN_MOTOR_1"/>
    <property type="match status" value="1"/>
</dbReference>
<dbReference type="PROSITE" id="PS50067">
    <property type="entry name" value="KINESIN_MOTOR_2"/>
    <property type="match status" value="1"/>
</dbReference>
<reference key="1">
    <citation type="submission" date="2001-05" db="EMBL/GenBank/DDBJ databases">
        <title>An Arabidopsis thaliana gene encoding a kinesin-related protein that belongs to Chromokinesin/KIF4 subfamily.</title>
        <authorList>
            <person name="Itoh R."/>
        </authorList>
    </citation>
    <scope>NUCLEOTIDE SEQUENCE [MRNA]</scope>
</reference>
<reference key="2">
    <citation type="journal article" date="2000" name="Nature">
        <title>Sequence and analysis of chromosome 3 of the plant Arabidopsis thaliana.</title>
        <authorList>
            <person name="Salanoubat M."/>
            <person name="Lemcke K."/>
            <person name="Rieger M."/>
            <person name="Ansorge W."/>
            <person name="Unseld M."/>
            <person name="Fartmann B."/>
            <person name="Valle G."/>
            <person name="Bloecker H."/>
            <person name="Perez-Alonso M."/>
            <person name="Obermaier B."/>
            <person name="Delseny M."/>
            <person name="Boutry M."/>
            <person name="Grivell L.A."/>
            <person name="Mache R."/>
            <person name="Puigdomenech P."/>
            <person name="De Simone V."/>
            <person name="Choisne N."/>
            <person name="Artiguenave F."/>
            <person name="Robert C."/>
            <person name="Brottier P."/>
            <person name="Wincker P."/>
            <person name="Cattolico L."/>
            <person name="Weissenbach J."/>
            <person name="Saurin W."/>
            <person name="Quetier F."/>
            <person name="Schaefer M."/>
            <person name="Mueller-Auer S."/>
            <person name="Gabel C."/>
            <person name="Fuchs M."/>
            <person name="Benes V."/>
            <person name="Wurmbach E."/>
            <person name="Drzonek H."/>
            <person name="Erfle H."/>
            <person name="Jordan N."/>
            <person name="Bangert S."/>
            <person name="Wiedelmann R."/>
            <person name="Kranz H."/>
            <person name="Voss H."/>
            <person name="Holland R."/>
            <person name="Brandt P."/>
            <person name="Nyakatura G."/>
            <person name="Vezzi A."/>
            <person name="D'Angelo M."/>
            <person name="Pallavicini A."/>
            <person name="Toppo S."/>
            <person name="Simionati B."/>
            <person name="Conrad A."/>
            <person name="Hornischer K."/>
            <person name="Kauer G."/>
            <person name="Loehnert T.-H."/>
            <person name="Nordsiek G."/>
            <person name="Reichelt J."/>
            <person name="Scharfe M."/>
            <person name="Schoen O."/>
            <person name="Bargues M."/>
            <person name="Terol J."/>
            <person name="Climent J."/>
            <person name="Navarro P."/>
            <person name="Collado C."/>
            <person name="Perez-Perez A."/>
            <person name="Ottenwaelder B."/>
            <person name="Duchemin D."/>
            <person name="Cooke R."/>
            <person name="Laudie M."/>
            <person name="Berger-Llauro C."/>
            <person name="Purnelle B."/>
            <person name="Masuy D."/>
            <person name="de Haan M."/>
            <person name="Maarse A.C."/>
            <person name="Alcaraz J.-P."/>
            <person name="Cottet A."/>
            <person name="Casacuberta E."/>
            <person name="Monfort A."/>
            <person name="Argiriou A."/>
            <person name="Flores M."/>
            <person name="Liguori R."/>
            <person name="Vitale D."/>
            <person name="Mannhaupt G."/>
            <person name="Haase D."/>
            <person name="Schoof H."/>
            <person name="Rudd S."/>
            <person name="Zaccaria P."/>
            <person name="Mewes H.-W."/>
            <person name="Mayer K.F.X."/>
            <person name="Kaul S."/>
            <person name="Town C.D."/>
            <person name="Koo H.L."/>
            <person name="Tallon L.J."/>
            <person name="Jenkins J."/>
            <person name="Rooney T."/>
            <person name="Rizzo M."/>
            <person name="Walts A."/>
            <person name="Utterback T."/>
            <person name="Fujii C.Y."/>
            <person name="Shea T.P."/>
            <person name="Creasy T.H."/>
            <person name="Haas B."/>
            <person name="Maiti R."/>
            <person name="Wu D."/>
            <person name="Peterson J."/>
            <person name="Van Aken S."/>
            <person name="Pai G."/>
            <person name="Militscher J."/>
            <person name="Sellers P."/>
            <person name="Gill J.E."/>
            <person name="Feldblyum T.V."/>
            <person name="Preuss D."/>
            <person name="Lin X."/>
            <person name="Nierman W.C."/>
            <person name="Salzberg S.L."/>
            <person name="White O."/>
            <person name="Venter J.C."/>
            <person name="Fraser C.M."/>
            <person name="Kaneko T."/>
            <person name="Nakamura Y."/>
            <person name="Sato S."/>
            <person name="Kato T."/>
            <person name="Asamizu E."/>
            <person name="Sasamoto S."/>
            <person name="Kimura T."/>
            <person name="Idesawa K."/>
            <person name="Kawashima K."/>
            <person name="Kishida Y."/>
            <person name="Kiyokawa C."/>
            <person name="Kohara M."/>
            <person name="Matsumoto M."/>
            <person name="Matsuno A."/>
            <person name="Muraki A."/>
            <person name="Nakayama S."/>
            <person name="Nakazaki N."/>
            <person name="Shinpo S."/>
            <person name="Takeuchi C."/>
            <person name="Wada T."/>
            <person name="Watanabe A."/>
            <person name="Yamada M."/>
            <person name="Yasuda M."/>
            <person name="Tabata S."/>
        </authorList>
    </citation>
    <scope>NUCLEOTIDE SEQUENCE [LARGE SCALE GENOMIC DNA]</scope>
    <source>
        <strain>cv. Columbia</strain>
    </source>
</reference>
<reference key="3">
    <citation type="journal article" date="2017" name="Plant J.">
        <title>Araport11: a complete reannotation of the Arabidopsis thaliana reference genome.</title>
        <authorList>
            <person name="Cheng C.Y."/>
            <person name="Krishnakumar V."/>
            <person name="Chan A.P."/>
            <person name="Thibaud-Nissen F."/>
            <person name="Schobel S."/>
            <person name="Town C.D."/>
        </authorList>
    </citation>
    <scope>GENOME REANNOTATION</scope>
    <source>
        <strain>cv. Columbia</strain>
    </source>
</reference>
<reference key="4">
    <citation type="journal article" date="2001" name="BMC Genomics">
        <title>Kinesins in the Arabidopsis genome: a comparative analysis among eukaryotes.</title>
        <authorList>
            <person name="Reddy A.S."/>
            <person name="Day I.S."/>
        </authorList>
    </citation>
    <scope>GENE FAMILY</scope>
</reference>
<reference key="5">
    <citation type="journal article" date="2006" name="BMC Genomics">
        <title>Comprehensive comparative analysis of kinesins in photosynthetic eukaryotes.</title>
        <authorList>
            <person name="Richardson D.N."/>
            <person name="Simmons M.P."/>
            <person name="Reddy A.S."/>
        </authorList>
    </citation>
    <scope>GENE FAMILY</scope>
    <scope>NOMENCLATURE</scope>
</reference>
<reference key="6">
    <citation type="journal article" date="2012" name="Protoplasma">
        <title>Functions of the Arabidopsis kinesin superfamily of microtubule-based motor proteins.</title>
        <authorList>
            <person name="Zhu C."/>
            <person name="Dixit R."/>
        </authorList>
    </citation>
    <scope>REVIEW</scope>
</reference>
<reference key="7">
    <citation type="journal article" date="2015" name="Mol. Plant">
        <title>Kinesin-4 functions in vesicular transport on cortical microtubules and regulates cell wall mechanics during cell elongation in plants.</title>
        <authorList>
            <person name="Kong Z."/>
            <person name="Ioki M."/>
            <person name="Braybrook S."/>
            <person name="Li S."/>
            <person name="Ye Z.H."/>
            <person name="Julie Lee Y.R."/>
            <person name="Hotta T."/>
            <person name="Chang A."/>
            <person name="Tian J."/>
            <person name="Wang G."/>
            <person name="Liu B."/>
        </authorList>
    </citation>
    <scope>IDENTIFICATION</scope>
    <scope>DISRUPTION PHENOTYPE</scope>
</reference>
<protein>
    <recommendedName>
        <fullName evidence="8">Kinesin-like protein KIN-4B</fullName>
    </recommendedName>
    <alternativeName>
        <fullName evidence="7">AtKINESIN-4B</fullName>
    </alternativeName>
</protein>
<name>KN4B_ARATH</name>
<feature type="chain" id="PRO_0000436185" description="Kinesin-like protein KIN-4B">
    <location>
        <begin position="1"/>
        <end position="1051"/>
    </location>
</feature>
<feature type="domain" description="Kinesin motor" evidence="3">
    <location>
        <begin position="25"/>
        <end position="380"/>
    </location>
</feature>
<feature type="region of interest" description="Disordered" evidence="4">
    <location>
        <begin position="1"/>
        <end position="21"/>
    </location>
</feature>
<feature type="region of interest" description="Disordered" evidence="4">
    <location>
        <begin position="916"/>
        <end position="946"/>
    </location>
</feature>
<feature type="region of interest" description="Disordered" evidence="4">
    <location>
        <begin position="1029"/>
        <end position="1051"/>
    </location>
</feature>
<feature type="coiled-coil region" evidence="2">
    <location>
        <begin position="414"/>
        <end position="448"/>
    </location>
</feature>
<feature type="coiled-coil region" evidence="2">
    <location>
        <begin position="540"/>
        <end position="644"/>
    </location>
</feature>
<feature type="compositionally biased region" description="Low complexity" evidence="4">
    <location>
        <begin position="916"/>
        <end position="925"/>
    </location>
</feature>
<feature type="binding site" evidence="3">
    <location>
        <begin position="104"/>
        <end position="111"/>
    </location>
    <ligand>
        <name>ATP</name>
        <dbReference type="ChEBI" id="CHEBI:30616"/>
    </ligand>
</feature>
<organism>
    <name type="scientific">Arabidopsis thaliana</name>
    <name type="common">Mouse-ear cress</name>
    <dbReference type="NCBI Taxonomy" id="3702"/>
    <lineage>
        <taxon>Eukaryota</taxon>
        <taxon>Viridiplantae</taxon>
        <taxon>Streptophyta</taxon>
        <taxon>Embryophyta</taxon>
        <taxon>Tracheophyta</taxon>
        <taxon>Spermatophyta</taxon>
        <taxon>Magnoliopsida</taxon>
        <taxon>eudicotyledons</taxon>
        <taxon>Gunneridae</taxon>
        <taxon>Pentapetalae</taxon>
        <taxon>rosids</taxon>
        <taxon>malvids</taxon>
        <taxon>Brassicales</taxon>
        <taxon>Brassicaceae</taxon>
        <taxon>Camelineae</taxon>
        <taxon>Arabidopsis</taxon>
    </lineage>
</organism>
<comment type="function">
    <text evidence="1">Kinesin-like motor protein involved in the control of the oriented deposition of cellulose microfibrils.</text>
</comment>
<comment type="subunit">
    <text evidence="1">Homodimer.</text>
</comment>
<comment type="domain">
    <text evidence="1">Composed of an N-terminal domain which is responsible for the motor activity of kinesin (it hydrolyzes ATP and binds microtubule) and a central to C-terminal alpha-helical coiled coil domain that mediates the heavy chain dimerization.</text>
</comment>
<comment type="disruption phenotype">
    <text evidence="5">No visible phenotype.</text>
</comment>
<comment type="similarity">
    <text evidence="6">Belongs to the TRAFAC class myosin-kinesin ATPase superfamily. Kinesin family. KIN-4 subfamily.</text>
</comment>
<comment type="sequence caution" evidence="8">
    <conflict type="erroneous gene model prediction">
        <sequence resource="EMBL-CDS" id="CAB62303"/>
    </conflict>
</comment>
<sequence length="1051" mass="118762">MESHSSLSSSSSSSPPSSLSSESCCVKVAVNVRPLIGDEVTQGCRECVSVSPVTPQVQMGTHPFTFDHVYGSNGSPSSLMFEECVAPLVDGLFHGYNATVLAYGQTGSGKTYTMGTGIKDGTKNGLIPQVMSALFNKIDSVKHQMGFQLHVSFIEILKEEVLDLLDSSVPFNRLANGTPGKVVLSKSPVQIRESPNGVITLSGATEVPIATKEEMASCLEQGSLTRATGSTNMNNESSRSHAIFTITLEQMRKISSISVVKDTVDEDMGEEYCCAKLHLVDLAGSERAKRTGSGGVRLKEGIHINRGLLALGNVISALGDEKRRKEGAHVPYRDSKLTRLLQDSLGGNSKTVMIACISPADINAEETLNTLKYANRARNIQNKPVANKDLICSEMQKMRQELQYLQATLCARGATSSEEVQVMREKIMKLESANEELSRELHIYRSKRVTLDYCNIDAQEDGVIFSKDDGLKRGFESMDSDYEMSEATSGGISEDIGAAEEWEHALRQNSMGKELNELSKRLEEKESEMRVCGIGTETIRQHFEKKMMELEKEKRTVQDERDMLLAEVEELAASSDRQAQVARDNHAHKLKALETQILNLKKKQENQVEVLKQKQKSEDAAKRLKTEIQCIKAQKVQLQQKMKQEAEQFRQWKASQEKELLQLKKEGRKTEHERLKLEALNRRQKMVLQRKTEEAAMATKRLKELLEARKSSPHDISVIANGQPPSRQTNEKSLRKWLDNELEVMAKVHQVRFQYEKQIQVRAALAVELTSLRQEMEFPSNSHQEKNGQFRFLSPNTRLERIASLESMLDVSSNALTAMGSQLSEAEEREHSLHAKPRWNHIQSMTDAKYLLQYVFDSTAEARSKIWEKDRDIKEKKEQLNDLLCLLQLTEVQNREILKEKKTREQTVSIALASTSSSYSGSSRSSSKHYGDNNASDDPSSPSSTYHRATKHLKYTGPGIVNISVRESEALLEETRKMKAMKKMGQSGKLWKWKRSHHQWLLQFKWKWQKPWKLSEWIKQNDETTMHVMSKSHHDDEDDHSWNRHSMFQGA</sequence>
<accession>Q94LW7</accession>
<accession>Q9SNE3</accession>